<proteinExistence type="evidence at protein level"/>
<reference key="1">
    <citation type="journal article" date="2005" name="J. Bacteriol.">
        <title>The genome of Sulfolobus acidocaldarius, a model organism of the Crenarchaeota.</title>
        <authorList>
            <person name="Chen L."/>
            <person name="Bruegger K."/>
            <person name="Skovgaard M."/>
            <person name="Redder P."/>
            <person name="She Q."/>
            <person name="Torarinsson E."/>
            <person name="Greve B."/>
            <person name="Awayez M."/>
            <person name="Zibat A."/>
            <person name="Klenk H.-P."/>
            <person name="Garrett R.A."/>
        </authorList>
    </citation>
    <scope>NUCLEOTIDE SEQUENCE [LARGE SCALE GENOMIC DNA]</scope>
    <source>
        <strain>ATCC 33909 / DSM 639 / JCM 8929 / NBRC 15157 / NCIMB 11770</strain>
    </source>
</reference>
<feature type="chain" id="PRO_0000173974" description="DNA polymerase IV">
    <location>
        <begin position="1"/>
        <end position="354"/>
    </location>
</feature>
<feature type="domain" description="UmuC" evidence="1">
    <location>
        <begin position="3"/>
        <end position="188"/>
    </location>
</feature>
<feature type="active site" evidence="1">
    <location>
        <position position="106"/>
    </location>
</feature>
<feature type="binding site" evidence="1">
    <location>
        <position position="7"/>
    </location>
    <ligand>
        <name>Mg(2+)</name>
        <dbReference type="ChEBI" id="CHEBI:18420"/>
    </ligand>
</feature>
<feature type="binding site" evidence="1">
    <location>
        <position position="105"/>
    </location>
    <ligand>
        <name>Mg(2+)</name>
        <dbReference type="ChEBI" id="CHEBI:18420"/>
    </ligand>
</feature>
<feature type="site" description="Substrate discrimination" evidence="1">
    <location>
        <position position="12"/>
    </location>
</feature>
<feature type="strand" evidence="3">
    <location>
        <begin position="4"/>
        <end position="8"/>
    </location>
</feature>
<feature type="helix" evidence="3">
    <location>
        <begin position="11"/>
        <end position="19"/>
    </location>
</feature>
<feature type="helix" evidence="3">
    <location>
        <begin position="21"/>
        <end position="23"/>
    </location>
</feature>
<feature type="strand" evidence="3">
    <location>
        <begin position="28"/>
        <end position="33"/>
    </location>
</feature>
<feature type="strand" evidence="3">
    <location>
        <begin position="35"/>
        <end position="39"/>
    </location>
</feature>
<feature type="strand" evidence="3">
    <location>
        <begin position="41"/>
        <end position="46"/>
    </location>
</feature>
<feature type="helix" evidence="3">
    <location>
        <begin position="48"/>
        <end position="51"/>
    </location>
</feature>
<feature type="turn" evidence="3">
    <location>
        <begin position="52"/>
        <end position="54"/>
    </location>
</feature>
<feature type="helix" evidence="3">
    <location>
        <begin position="61"/>
        <end position="67"/>
    </location>
</feature>
<feature type="strand" evidence="3">
    <location>
        <begin position="71"/>
        <end position="75"/>
    </location>
</feature>
<feature type="helix" evidence="3">
    <location>
        <begin position="78"/>
        <end position="93"/>
    </location>
</feature>
<feature type="strand" evidence="3">
    <location>
        <begin position="97"/>
        <end position="103"/>
    </location>
</feature>
<feature type="strand" evidence="3">
    <location>
        <begin position="106"/>
        <end position="110"/>
    </location>
</feature>
<feature type="turn" evidence="3">
    <location>
        <begin position="112"/>
        <end position="117"/>
    </location>
</feature>
<feature type="helix" evidence="3">
    <location>
        <begin position="119"/>
        <end position="137"/>
    </location>
</feature>
<feature type="strand" evidence="3">
    <location>
        <begin position="141"/>
        <end position="148"/>
    </location>
</feature>
<feature type="helix" evidence="3">
    <location>
        <begin position="149"/>
        <end position="159"/>
    </location>
</feature>
<feature type="strand" evidence="3">
    <location>
        <begin position="164"/>
        <end position="166"/>
    </location>
</feature>
<feature type="helix" evidence="3">
    <location>
        <begin position="169"/>
        <end position="171"/>
    </location>
</feature>
<feature type="helix" evidence="3">
    <location>
        <begin position="172"/>
        <end position="178"/>
    </location>
</feature>
<feature type="helix" evidence="3">
    <location>
        <begin position="181"/>
        <end position="183"/>
    </location>
</feature>
<feature type="helix" evidence="3">
    <location>
        <begin position="189"/>
        <end position="197"/>
    </location>
</feature>
<feature type="helix" evidence="3">
    <location>
        <begin position="203"/>
        <end position="208"/>
    </location>
</feature>
<feature type="helix" evidence="3">
    <location>
        <begin position="211"/>
        <end position="218"/>
    </location>
</feature>
<feature type="helix" evidence="3">
    <location>
        <begin position="220"/>
        <end position="230"/>
    </location>
</feature>
<feature type="strand" evidence="5">
    <location>
        <begin position="240"/>
        <end position="242"/>
    </location>
</feature>
<feature type="strand" evidence="4">
    <location>
        <begin position="249"/>
        <end position="256"/>
    </location>
</feature>
<feature type="helix" evidence="4">
    <location>
        <begin position="259"/>
        <end position="276"/>
    </location>
</feature>
<feature type="strand" evidence="2">
    <location>
        <begin position="278"/>
        <end position="280"/>
    </location>
</feature>
<feature type="strand" evidence="4">
    <location>
        <begin position="282"/>
        <end position="290"/>
    </location>
</feature>
<feature type="strand" evidence="4">
    <location>
        <begin position="295"/>
        <end position="301"/>
    </location>
</feature>
<feature type="helix" evidence="4">
    <location>
        <begin position="308"/>
        <end position="325"/>
    </location>
</feature>
<feature type="strand" evidence="6">
    <location>
        <begin position="327"/>
        <end position="329"/>
    </location>
</feature>
<feature type="strand" evidence="4">
    <location>
        <begin position="331"/>
        <end position="340"/>
    </location>
</feature>
<protein>
    <recommendedName>
        <fullName evidence="1">DNA polymerase IV</fullName>
        <shortName evidence="1">Pol IV</shortName>
        <ecNumber evidence="1">2.7.7.7</ecNumber>
    </recommendedName>
</protein>
<organism>
    <name type="scientific">Sulfolobus acidocaldarius (strain ATCC 33909 / DSM 639 / JCM 8929 / NBRC 15157 / NCIMB 11770)</name>
    <dbReference type="NCBI Taxonomy" id="330779"/>
    <lineage>
        <taxon>Archaea</taxon>
        <taxon>Thermoproteota</taxon>
        <taxon>Thermoprotei</taxon>
        <taxon>Sulfolobales</taxon>
        <taxon>Sulfolobaceae</taxon>
        <taxon>Sulfolobus</taxon>
    </lineage>
</organism>
<dbReference type="EC" id="2.7.7.7" evidence="1"/>
<dbReference type="EMBL" id="CP000077">
    <property type="protein sequence ID" value="AAY79949.1"/>
    <property type="molecule type" value="Genomic_DNA"/>
</dbReference>
<dbReference type="RefSeq" id="WP_011277451.1">
    <property type="nucleotide sequence ID" value="NC_007181.1"/>
</dbReference>
<dbReference type="PDB" id="3BQ0">
    <property type="method" value="X-ray"/>
    <property type="resolution" value="2.60 A"/>
    <property type="chains" value="A=1-354"/>
</dbReference>
<dbReference type="PDB" id="3BQ1">
    <property type="method" value="X-ray"/>
    <property type="resolution" value="2.70 A"/>
    <property type="chains" value="A=1-354"/>
</dbReference>
<dbReference type="PDB" id="3BQ2">
    <property type="method" value="X-ray"/>
    <property type="resolution" value="2.70 A"/>
    <property type="chains" value="A=1-354"/>
</dbReference>
<dbReference type="PDB" id="4F4W">
    <property type="method" value="X-ray"/>
    <property type="resolution" value="1.90 A"/>
    <property type="chains" value="A/B=1-231"/>
</dbReference>
<dbReference type="PDB" id="4F4X">
    <property type="method" value="X-ray"/>
    <property type="resolution" value="2.05 A"/>
    <property type="chains" value="A=1-231"/>
</dbReference>
<dbReference type="PDB" id="4F4Y">
    <property type="method" value="X-ray"/>
    <property type="resolution" value="2.34 A"/>
    <property type="chains" value="A/B=1-354"/>
</dbReference>
<dbReference type="PDB" id="4F4Z">
    <property type="method" value="X-ray"/>
    <property type="resolution" value="2.30 A"/>
    <property type="chains" value="A/B=248-354"/>
</dbReference>
<dbReference type="PDB" id="4F50">
    <property type="method" value="X-ray"/>
    <property type="resolution" value="2.22 A"/>
    <property type="chains" value="A=1-246"/>
</dbReference>
<dbReference type="PDB" id="4HYK">
    <property type="method" value="X-ray"/>
    <property type="resolution" value="2.80 A"/>
    <property type="chains" value="A=1-354"/>
</dbReference>
<dbReference type="PDB" id="4NLG">
    <property type="method" value="X-ray"/>
    <property type="resolution" value="2.40 A"/>
    <property type="chains" value="A=1-354"/>
</dbReference>
<dbReference type="PDBsum" id="3BQ0"/>
<dbReference type="PDBsum" id="3BQ1"/>
<dbReference type="PDBsum" id="3BQ2"/>
<dbReference type="PDBsum" id="4F4W"/>
<dbReference type="PDBsum" id="4F4X"/>
<dbReference type="PDBsum" id="4F4Y"/>
<dbReference type="PDBsum" id="4F4Z"/>
<dbReference type="PDBsum" id="4F50"/>
<dbReference type="PDBsum" id="4HYK"/>
<dbReference type="PDBsum" id="4NLG"/>
<dbReference type="SMR" id="Q4JB80"/>
<dbReference type="STRING" id="330779.Saci_0554"/>
<dbReference type="GeneID" id="14551079"/>
<dbReference type="KEGG" id="sai:Saci_0554"/>
<dbReference type="PATRIC" id="fig|330779.12.peg.538"/>
<dbReference type="eggNOG" id="arCOG04582">
    <property type="taxonomic scope" value="Archaea"/>
</dbReference>
<dbReference type="HOGENOM" id="CLU_012348_1_2_2"/>
<dbReference type="BRENDA" id="2.7.7.7">
    <property type="organism ID" value="6160"/>
</dbReference>
<dbReference type="EvolutionaryTrace" id="Q4JB80"/>
<dbReference type="Proteomes" id="UP000001018">
    <property type="component" value="Chromosome"/>
</dbReference>
<dbReference type="GO" id="GO:0005737">
    <property type="term" value="C:cytoplasm"/>
    <property type="evidence" value="ECO:0007669"/>
    <property type="project" value="UniProtKB-SubCell"/>
</dbReference>
<dbReference type="GO" id="GO:0003684">
    <property type="term" value="F:damaged DNA binding"/>
    <property type="evidence" value="ECO:0007669"/>
    <property type="project" value="InterPro"/>
</dbReference>
<dbReference type="GO" id="GO:0003887">
    <property type="term" value="F:DNA-directed DNA polymerase activity"/>
    <property type="evidence" value="ECO:0007669"/>
    <property type="project" value="UniProtKB-UniRule"/>
</dbReference>
<dbReference type="GO" id="GO:0000287">
    <property type="term" value="F:magnesium ion binding"/>
    <property type="evidence" value="ECO:0007669"/>
    <property type="project" value="UniProtKB-UniRule"/>
</dbReference>
<dbReference type="GO" id="GO:0006261">
    <property type="term" value="P:DNA-templated DNA replication"/>
    <property type="evidence" value="ECO:0007669"/>
    <property type="project" value="UniProtKB-UniRule"/>
</dbReference>
<dbReference type="GO" id="GO:0042276">
    <property type="term" value="P:error-prone translesion synthesis"/>
    <property type="evidence" value="ECO:0007669"/>
    <property type="project" value="TreeGrafter"/>
</dbReference>
<dbReference type="CDD" id="cd03586">
    <property type="entry name" value="PolY_Pol_IV_kappa"/>
    <property type="match status" value="1"/>
</dbReference>
<dbReference type="Gene3D" id="3.30.70.270">
    <property type="match status" value="2"/>
</dbReference>
<dbReference type="Gene3D" id="3.40.1170.60">
    <property type="match status" value="1"/>
</dbReference>
<dbReference type="Gene3D" id="1.10.150.20">
    <property type="entry name" value="5' to 3' exonuclease, C-terminal subdomain"/>
    <property type="match status" value="1"/>
</dbReference>
<dbReference type="Gene3D" id="3.30.1490.100">
    <property type="entry name" value="DNA polymerase, Y-family, little finger domain"/>
    <property type="match status" value="1"/>
</dbReference>
<dbReference type="HAMAP" id="MF_01113">
    <property type="entry name" value="DNApol_IV"/>
    <property type="match status" value="1"/>
</dbReference>
<dbReference type="InterPro" id="IPR043502">
    <property type="entry name" value="DNA/RNA_pol_sf"/>
</dbReference>
<dbReference type="InterPro" id="IPR036775">
    <property type="entry name" value="DNA_pol_Y-fam_lit_finger_sf"/>
</dbReference>
<dbReference type="InterPro" id="IPR050116">
    <property type="entry name" value="DNA_polymerase-Y"/>
</dbReference>
<dbReference type="InterPro" id="IPR022880">
    <property type="entry name" value="DNApol_IV"/>
</dbReference>
<dbReference type="InterPro" id="IPR024728">
    <property type="entry name" value="PolY_HhH_motif"/>
</dbReference>
<dbReference type="InterPro" id="IPR043128">
    <property type="entry name" value="Rev_trsase/Diguanyl_cyclase"/>
</dbReference>
<dbReference type="InterPro" id="IPR001126">
    <property type="entry name" value="UmuC"/>
</dbReference>
<dbReference type="NCBIfam" id="NF002292">
    <property type="entry name" value="PRK01216.1"/>
    <property type="match status" value="1"/>
</dbReference>
<dbReference type="PANTHER" id="PTHR11076:SF33">
    <property type="entry name" value="DNA POLYMERASE KAPPA"/>
    <property type="match status" value="1"/>
</dbReference>
<dbReference type="PANTHER" id="PTHR11076">
    <property type="entry name" value="DNA REPAIR POLYMERASE UMUC / TRANSFERASE FAMILY MEMBER"/>
    <property type="match status" value="1"/>
</dbReference>
<dbReference type="Pfam" id="PF00817">
    <property type="entry name" value="IMS"/>
    <property type="match status" value="1"/>
</dbReference>
<dbReference type="Pfam" id="PF11798">
    <property type="entry name" value="IMS_HHH"/>
    <property type="match status" value="1"/>
</dbReference>
<dbReference type="SUPFAM" id="SSF56672">
    <property type="entry name" value="DNA/RNA polymerases"/>
    <property type="match status" value="1"/>
</dbReference>
<dbReference type="SUPFAM" id="SSF100879">
    <property type="entry name" value="Lesion bypass DNA polymerase (Y-family), little finger domain"/>
    <property type="match status" value="1"/>
</dbReference>
<dbReference type="PROSITE" id="PS50173">
    <property type="entry name" value="UMUC"/>
    <property type="match status" value="1"/>
</dbReference>
<evidence type="ECO:0000255" key="1">
    <source>
        <dbReference type="HAMAP-Rule" id="MF_01113"/>
    </source>
</evidence>
<evidence type="ECO:0007829" key="2">
    <source>
        <dbReference type="PDB" id="3BQ1"/>
    </source>
</evidence>
<evidence type="ECO:0007829" key="3">
    <source>
        <dbReference type="PDB" id="4F4W"/>
    </source>
</evidence>
<evidence type="ECO:0007829" key="4">
    <source>
        <dbReference type="PDB" id="4F4Z"/>
    </source>
</evidence>
<evidence type="ECO:0007829" key="5">
    <source>
        <dbReference type="PDB" id="4F50"/>
    </source>
</evidence>
<evidence type="ECO:0007829" key="6">
    <source>
        <dbReference type="PDB" id="4HYK"/>
    </source>
</evidence>
<sequence>MIVIFVDFDYFFAQVEEVLNPQYKGKPLVVCVYSGRTKTSGAVATANYEARKLGVKAGMPIIKAMQIAPSAIYVPMRKPIYEAFSNRIMNLLNKHADKIEVASIDEAYLDVTNKVEGNFENGIELARKIKQEILEKEKITVTVGVAPNKILAKIIADKSKPNGLGVIRPTEVQDFLNELDIDEIPGIGSVLARRLNELGIQKLRDILSKNYNELEKITGKAKALYLLKLAQNKYSEPVENKSKIPHGRYLTLPYNTRDVKVILPYLKKAINEAYNKVNGIPMRITVIAIMEDLDILSKGKKFKHGISIDNAYKVAEDLLRELLVRDKRRNVRRIGVKLDNIIINKTNLSDFFDI</sequence>
<comment type="function">
    <text evidence="1">Poorly processive, error-prone DNA polymerase involved in untargeted mutagenesis. Copies undamaged DNA at stalled replication forks, which arise in vivo from mismatched or misaligned primer ends. These misaligned primers can be extended by PolIV. Exhibits no 3'-5' exonuclease (proofreading) activity. May be involved in translesional synthesis.</text>
</comment>
<comment type="catalytic activity">
    <reaction evidence="1">
        <text>DNA(n) + a 2'-deoxyribonucleoside 5'-triphosphate = DNA(n+1) + diphosphate</text>
        <dbReference type="Rhea" id="RHEA:22508"/>
        <dbReference type="Rhea" id="RHEA-COMP:17339"/>
        <dbReference type="Rhea" id="RHEA-COMP:17340"/>
        <dbReference type="ChEBI" id="CHEBI:33019"/>
        <dbReference type="ChEBI" id="CHEBI:61560"/>
        <dbReference type="ChEBI" id="CHEBI:173112"/>
        <dbReference type="EC" id="2.7.7.7"/>
    </reaction>
</comment>
<comment type="cofactor">
    <cofactor evidence="1">
        <name>Mg(2+)</name>
        <dbReference type="ChEBI" id="CHEBI:18420"/>
    </cofactor>
    <text evidence="1">Binds 2 magnesium ions per subunit.</text>
</comment>
<comment type="subunit">
    <text evidence="1">Monomer.</text>
</comment>
<comment type="subcellular location">
    <subcellularLocation>
        <location evidence="1">Cytoplasm</location>
    </subcellularLocation>
</comment>
<comment type="similarity">
    <text evidence="1">Belongs to the DNA polymerase type-Y family.</text>
</comment>
<accession>Q4JB80</accession>
<name>DPO4_SULAC</name>
<keyword id="KW-0002">3D-structure</keyword>
<keyword id="KW-0963">Cytoplasm</keyword>
<keyword id="KW-0227">DNA damage</keyword>
<keyword id="KW-0234">DNA repair</keyword>
<keyword id="KW-0235">DNA replication</keyword>
<keyword id="KW-0238">DNA-binding</keyword>
<keyword id="KW-0239">DNA-directed DNA polymerase</keyword>
<keyword id="KW-0460">Magnesium</keyword>
<keyword id="KW-0479">Metal-binding</keyword>
<keyword id="KW-0515">Mutator protein</keyword>
<keyword id="KW-0548">Nucleotidyltransferase</keyword>
<keyword id="KW-1185">Reference proteome</keyword>
<keyword id="KW-0808">Transferase</keyword>
<gene>
    <name evidence="1" type="primary">dbh</name>
    <name type="ordered locus">Saci_0554</name>
</gene>